<name>MIOX_DANRE</name>
<reference key="1">
    <citation type="submission" date="2005-06" db="EMBL/GenBank/DDBJ databases">
        <authorList>
            <consortium name="NIH - Zebrafish Gene Collection (ZGC) project"/>
        </authorList>
    </citation>
    <scope>NUCLEOTIDE SEQUENCE [LARGE SCALE MRNA]</scope>
    <source>
        <tissue>Larva</tissue>
    </source>
</reference>
<dbReference type="EC" id="1.13.99.1"/>
<dbReference type="EMBL" id="BC097218">
    <property type="protein sequence ID" value="AAH97218.1"/>
    <property type="molecule type" value="mRNA"/>
</dbReference>
<dbReference type="RefSeq" id="NP_001025437.1">
    <property type="nucleotide sequence ID" value="NM_001030266.1"/>
</dbReference>
<dbReference type="SMR" id="Q4V8T0"/>
<dbReference type="FunCoup" id="Q4V8T0">
    <property type="interactions" value="875"/>
</dbReference>
<dbReference type="STRING" id="7955.ENSDARP00000115890"/>
<dbReference type="PaxDb" id="7955-ENSDARP00000115890"/>
<dbReference type="GeneID" id="571850"/>
<dbReference type="KEGG" id="dre:571850"/>
<dbReference type="AGR" id="ZFIN:ZDB-GENE-050913-113"/>
<dbReference type="CTD" id="55586"/>
<dbReference type="ZFIN" id="ZDB-GENE-050913-113">
    <property type="gene designation" value="miox"/>
</dbReference>
<dbReference type="eggNOG" id="KOG1573">
    <property type="taxonomic scope" value="Eukaryota"/>
</dbReference>
<dbReference type="InParanoid" id="Q4V8T0"/>
<dbReference type="OrthoDB" id="5151075at2759"/>
<dbReference type="Reactome" id="R-DRE-1855183">
    <property type="pathway name" value="Synthesis of IP2, IP, and Ins in the cytosol"/>
</dbReference>
<dbReference type="UniPathway" id="UPA00111">
    <property type="reaction ID" value="UER00527"/>
</dbReference>
<dbReference type="PRO" id="PR:Q4V8T0"/>
<dbReference type="Proteomes" id="UP000000437">
    <property type="component" value="Chromosome 18"/>
</dbReference>
<dbReference type="GO" id="GO:0005737">
    <property type="term" value="C:cytoplasm"/>
    <property type="evidence" value="ECO:0007669"/>
    <property type="project" value="UniProtKB-SubCell"/>
</dbReference>
<dbReference type="GO" id="GO:0008199">
    <property type="term" value="F:ferric iron binding"/>
    <property type="evidence" value="ECO:0000250"/>
    <property type="project" value="UniProtKB"/>
</dbReference>
<dbReference type="GO" id="GO:0050113">
    <property type="term" value="F:inositol oxygenase activity"/>
    <property type="evidence" value="ECO:0000250"/>
    <property type="project" value="UniProtKB"/>
</dbReference>
<dbReference type="GO" id="GO:0019310">
    <property type="term" value="P:inositol catabolic process"/>
    <property type="evidence" value="ECO:0000250"/>
    <property type="project" value="UniProtKB"/>
</dbReference>
<dbReference type="InterPro" id="IPR007828">
    <property type="entry name" value="Inositol_oxygenase"/>
</dbReference>
<dbReference type="PANTHER" id="PTHR12588:SF0">
    <property type="entry name" value="INOSITOL OXYGENASE"/>
    <property type="match status" value="1"/>
</dbReference>
<dbReference type="PANTHER" id="PTHR12588">
    <property type="entry name" value="MYOINOSITOL OXYGENASE"/>
    <property type="match status" value="1"/>
</dbReference>
<dbReference type="Pfam" id="PF05153">
    <property type="entry name" value="MIOX"/>
    <property type="match status" value="1"/>
</dbReference>
<dbReference type="SUPFAM" id="SSF109604">
    <property type="entry name" value="HD-domain/PDEase-like"/>
    <property type="match status" value="1"/>
</dbReference>
<evidence type="ECO:0000250" key="1"/>
<evidence type="ECO:0000305" key="2"/>
<proteinExistence type="evidence at transcript level"/>
<feature type="chain" id="PRO_0000079153" description="Inositol oxygenase">
    <location>
        <begin position="1"/>
        <end position="278"/>
    </location>
</feature>
<feature type="binding site" evidence="1">
    <location>
        <position position="22"/>
    </location>
    <ligand>
        <name>substrate</name>
    </ligand>
</feature>
<feature type="binding site" evidence="1">
    <location>
        <begin position="78"/>
        <end position="80"/>
    </location>
    <ligand>
        <name>substrate</name>
    </ligand>
</feature>
<feature type="binding site" evidence="1">
    <location>
        <position position="91"/>
    </location>
    <ligand>
        <name>Fe cation</name>
        <dbReference type="ChEBI" id="CHEBI:24875"/>
        <label>1</label>
    </ligand>
</feature>
<feature type="binding site" evidence="1">
    <location>
        <position position="116"/>
    </location>
    <ligand>
        <name>Fe cation</name>
        <dbReference type="ChEBI" id="CHEBI:24875"/>
        <label>1</label>
    </ligand>
</feature>
<feature type="binding site" evidence="1">
    <location>
        <position position="117"/>
    </location>
    <ligand>
        <name>Fe cation</name>
        <dbReference type="ChEBI" id="CHEBI:24875"/>
        <label>1</label>
    </ligand>
</feature>
<feature type="binding site" evidence="1">
    <location>
        <position position="117"/>
    </location>
    <ligand>
        <name>Fe cation</name>
        <dbReference type="ChEBI" id="CHEBI:24875"/>
        <label>2</label>
    </ligand>
</feature>
<feature type="binding site" evidence="1">
    <location>
        <position position="120"/>
    </location>
    <ligand>
        <name>substrate</name>
    </ligand>
</feature>
<feature type="binding site" evidence="1">
    <location>
        <begin position="134"/>
        <end position="135"/>
    </location>
    <ligand>
        <name>substrate</name>
    </ligand>
</feature>
<feature type="binding site" evidence="1">
    <location>
        <position position="187"/>
    </location>
    <ligand>
        <name>Fe cation</name>
        <dbReference type="ChEBI" id="CHEBI:24875"/>
        <label>2</label>
    </ligand>
</feature>
<feature type="binding site" evidence="1">
    <location>
        <begin position="213"/>
        <end position="214"/>
    </location>
    <ligand>
        <name>substrate</name>
    </ligand>
</feature>
<feature type="binding site" evidence="1">
    <location>
        <position position="213"/>
    </location>
    <ligand>
        <name>Fe cation</name>
        <dbReference type="ChEBI" id="CHEBI:24875"/>
        <label>2</label>
    </ligand>
</feature>
<feature type="binding site" evidence="1">
    <location>
        <position position="246"/>
    </location>
    <ligand>
        <name>Fe cation</name>
        <dbReference type="ChEBI" id="CHEBI:24875"/>
        <label>1</label>
    </ligand>
</feature>
<accession>Q4V8T0</accession>
<sequence length="278" mass="32735">MGPDPSLAYRPECHEKDKTEFRNFENGDLFDRVFNTYKLMHTHQTLDFVKQKHQVWSNCSHFSLSMMDSIDSLDELVDESDPDVDFPNSFHAFQTAEGIRREHPDKDWFQLVGLIHDVGKVMALYSEPQWAVVGDTYPVGCKFQNSIVFRNSTFEGNPDGKNPAPNTEFGIYEPQCGLDKVLMSWGHDEYLYRVMKFNKCTIPEEGLYMIRFHSFYPWHSNGDYMHLCNEKDQQMLPWVKEFNKFDLYTKSTELPDVERLKPYYQSLIDKYCPGVLQW</sequence>
<organism>
    <name type="scientific">Danio rerio</name>
    <name type="common">Zebrafish</name>
    <name type="synonym">Brachydanio rerio</name>
    <dbReference type="NCBI Taxonomy" id="7955"/>
    <lineage>
        <taxon>Eukaryota</taxon>
        <taxon>Metazoa</taxon>
        <taxon>Chordata</taxon>
        <taxon>Craniata</taxon>
        <taxon>Vertebrata</taxon>
        <taxon>Euteleostomi</taxon>
        <taxon>Actinopterygii</taxon>
        <taxon>Neopterygii</taxon>
        <taxon>Teleostei</taxon>
        <taxon>Ostariophysi</taxon>
        <taxon>Cypriniformes</taxon>
        <taxon>Danionidae</taxon>
        <taxon>Danioninae</taxon>
        <taxon>Danio</taxon>
    </lineage>
</organism>
<gene>
    <name type="primary">miox</name>
    <name type="ORF">zgc:114168</name>
</gene>
<keyword id="KW-0963">Cytoplasm</keyword>
<keyword id="KW-0408">Iron</keyword>
<keyword id="KW-0479">Metal-binding</keyword>
<keyword id="KW-0560">Oxidoreductase</keyword>
<keyword id="KW-1185">Reference proteome</keyword>
<comment type="catalytic activity">
    <reaction>
        <text>myo-inositol + O2 = D-glucuronate + H2O + H(+)</text>
        <dbReference type="Rhea" id="RHEA:23696"/>
        <dbReference type="ChEBI" id="CHEBI:15377"/>
        <dbReference type="ChEBI" id="CHEBI:15378"/>
        <dbReference type="ChEBI" id="CHEBI:15379"/>
        <dbReference type="ChEBI" id="CHEBI:17268"/>
        <dbReference type="ChEBI" id="CHEBI:58720"/>
        <dbReference type="EC" id="1.13.99.1"/>
    </reaction>
</comment>
<comment type="cofactor">
    <cofactor evidence="1">
        <name>Fe cation</name>
        <dbReference type="ChEBI" id="CHEBI:24875"/>
    </cofactor>
    <text evidence="1">Binds 2 iron ions per subunit.</text>
</comment>
<comment type="pathway">
    <text>Polyol metabolism; myo-inositol degradation into D-glucuronate; D-glucuronate from myo-inositol: step 1/1.</text>
</comment>
<comment type="subcellular location">
    <subcellularLocation>
        <location evidence="1">Cytoplasm</location>
    </subcellularLocation>
</comment>
<comment type="similarity">
    <text evidence="2">Belongs to the myo-inositol oxygenase family.</text>
</comment>
<protein>
    <recommendedName>
        <fullName>Inositol oxygenase</fullName>
        <ecNumber>1.13.99.1</ecNumber>
    </recommendedName>
    <alternativeName>
        <fullName>Myo-inositol oxygenase</fullName>
        <shortName>MI oxygenase</shortName>
    </alternativeName>
</protein>